<proteinExistence type="evidence at transcript level"/>
<accession>Q5U4Q6</accession>
<gene>
    <name type="primary">golph3l</name>
    <name type="ORF">TEgg035m19.1</name>
    <name type="ORF">TEgg061g02.1</name>
</gene>
<dbReference type="EMBL" id="CR761980">
    <property type="protein sequence ID" value="CAJ81394.1"/>
    <property type="molecule type" value="mRNA"/>
</dbReference>
<dbReference type="EMBL" id="CR848444">
    <property type="protein sequence ID" value="CAJ83698.1"/>
    <property type="molecule type" value="mRNA"/>
</dbReference>
<dbReference type="EMBL" id="BC084991">
    <property type="protein sequence ID" value="AAH84991.1"/>
    <property type="molecule type" value="mRNA"/>
</dbReference>
<dbReference type="RefSeq" id="NP_001011166.1">
    <property type="nucleotide sequence ID" value="NM_001011166.2"/>
</dbReference>
<dbReference type="SMR" id="Q5U4Q6"/>
<dbReference type="FunCoup" id="Q5U4Q6">
    <property type="interactions" value="927"/>
</dbReference>
<dbReference type="STRING" id="8364.ENSXETP00000017790"/>
<dbReference type="PaxDb" id="8364-ENSXETP00000019548"/>
<dbReference type="DNASU" id="496584"/>
<dbReference type="GeneID" id="496584"/>
<dbReference type="KEGG" id="xtr:496584"/>
<dbReference type="AGR" id="Xenbase:XB-GENE-1003088"/>
<dbReference type="CTD" id="55204"/>
<dbReference type="Xenbase" id="XB-GENE-1003088">
    <property type="gene designation" value="golph3l"/>
</dbReference>
<dbReference type="eggNOG" id="KOG3983">
    <property type="taxonomic scope" value="Eukaryota"/>
</dbReference>
<dbReference type="HOGENOM" id="CLU_036311_0_0_1"/>
<dbReference type="InParanoid" id="Q5U4Q6"/>
<dbReference type="OMA" id="KEXGYTS"/>
<dbReference type="OrthoDB" id="2189106at2759"/>
<dbReference type="TreeFam" id="TF314360"/>
<dbReference type="Proteomes" id="UP000008143">
    <property type="component" value="Chromosome 8"/>
</dbReference>
<dbReference type="Bgee" id="ENSXETG00000008912">
    <property type="expression patterns" value="Expressed in 4-cell stage embryo and 15 other cell types or tissues"/>
</dbReference>
<dbReference type="GO" id="GO:0031985">
    <property type="term" value="C:Golgi cisterna"/>
    <property type="evidence" value="ECO:0000250"/>
    <property type="project" value="UniProtKB"/>
</dbReference>
<dbReference type="GO" id="GO:0032580">
    <property type="term" value="C:Golgi cisterna membrane"/>
    <property type="evidence" value="ECO:0007669"/>
    <property type="project" value="UniProtKB-SubCell"/>
</dbReference>
<dbReference type="GO" id="GO:0005802">
    <property type="term" value="C:trans-Golgi network"/>
    <property type="evidence" value="ECO:0000250"/>
    <property type="project" value="UniProtKB"/>
</dbReference>
<dbReference type="GO" id="GO:0070273">
    <property type="term" value="F:phosphatidylinositol-4-phosphate binding"/>
    <property type="evidence" value="ECO:0000250"/>
    <property type="project" value="UniProtKB"/>
</dbReference>
<dbReference type="GO" id="GO:0007030">
    <property type="term" value="P:Golgi organization"/>
    <property type="evidence" value="ECO:0000250"/>
    <property type="project" value="UniProtKB"/>
</dbReference>
<dbReference type="GO" id="GO:0050714">
    <property type="term" value="P:positive regulation of protein secretion"/>
    <property type="evidence" value="ECO:0000250"/>
    <property type="project" value="UniProtKB"/>
</dbReference>
<dbReference type="FunFam" id="1.10.3630.10:FF:000001">
    <property type="entry name" value="Golgi phosphoprotein 3"/>
    <property type="match status" value="1"/>
</dbReference>
<dbReference type="Gene3D" id="1.10.3630.10">
    <property type="entry name" value="yeast vps74-n-term truncation variant domain like"/>
    <property type="match status" value="1"/>
</dbReference>
<dbReference type="InterPro" id="IPR008628">
    <property type="entry name" value="GPP34-like"/>
</dbReference>
<dbReference type="InterPro" id="IPR038261">
    <property type="entry name" value="GPP34-like_sf"/>
</dbReference>
<dbReference type="PANTHER" id="PTHR12704:SF4">
    <property type="entry name" value="GOLGI PHOSPHOPROTEIN 3-LIKE"/>
    <property type="match status" value="1"/>
</dbReference>
<dbReference type="PANTHER" id="PTHR12704">
    <property type="entry name" value="TRANS-GOLGI PROTEIN GMX33"/>
    <property type="match status" value="1"/>
</dbReference>
<dbReference type="Pfam" id="PF05719">
    <property type="entry name" value="GPP34"/>
    <property type="match status" value="1"/>
</dbReference>
<sequence>MTTLTRRGRRADVGQENRVDSEDYIKDKDEEESADSKDIRLTLMEEVLLLGLKDKEGYTSFWNDCISSGLRGGILIELFLRNRVVLEPSTLRKKRLTDRKVLLKSDTPTGDVLLDETLKHMKATEPAETVQSWIELLTGETWNPFKLQYQLRNVRERIAKNLVEKGILTTEKQNFLLFDMTTHPVSNTTEKQRLVKKLQESLLEKWVNDPHRMDRRTLALLVLAHSSDVLENAFSSLSDEKYDMAMTRSKELLDLDPDTEGNKPNTCEMIWAVLSAFNKS</sequence>
<name>GLP3L_XENTR</name>
<evidence type="ECO:0000250" key="1"/>
<evidence type="ECO:0000256" key="2">
    <source>
        <dbReference type="SAM" id="MobiDB-lite"/>
    </source>
</evidence>
<evidence type="ECO:0000305" key="3"/>
<organism>
    <name type="scientific">Xenopus tropicalis</name>
    <name type="common">Western clawed frog</name>
    <name type="synonym">Silurana tropicalis</name>
    <dbReference type="NCBI Taxonomy" id="8364"/>
    <lineage>
        <taxon>Eukaryota</taxon>
        <taxon>Metazoa</taxon>
        <taxon>Chordata</taxon>
        <taxon>Craniata</taxon>
        <taxon>Vertebrata</taxon>
        <taxon>Euteleostomi</taxon>
        <taxon>Amphibia</taxon>
        <taxon>Batrachia</taxon>
        <taxon>Anura</taxon>
        <taxon>Pipoidea</taxon>
        <taxon>Pipidae</taxon>
        <taxon>Xenopodinae</taxon>
        <taxon>Xenopus</taxon>
        <taxon>Silurana</taxon>
    </lineage>
</organism>
<protein>
    <recommendedName>
        <fullName>Golgi phosphoprotein 3-like</fullName>
    </recommendedName>
</protein>
<feature type="chain" id="PRO_0000324141" description="Golgi phosphoprotein 3-like">
    <location>
        <begin position="1"/>
        <end position="280"/>
    </location>
</feature>
<feature type="region of interest" description="Disordered" evidence="2">
    <location>
        <begin position="1"/>
        <end position="30"/>
    </location>
</feature>
<feature type="region of interest" description="Beta-hairpin required for oligomerization" evidence="1">
    <location>
        <begin position="171"/>
        <end position="182"/>
    </location>
</feature>
<feature type="compositionally biased region" description="Basic and acidic residues" evidence="2">
    <location>
        <begin position="10"/>
        <end position="30"/>
    </location>
</feature>
<feature type="binding site" evidence="1">
    <location>
        <position position="62"/>
    </location>
    <ligand>
        <name>a 1,2-diacyl-sn-glycero-3-phospho-(1D-myo-inositol 4-phosphate)</name>
        <dbReference type="ChEBI" id="CHEBI:58178"/>
    </ligand>
</feature>
<feature type="binding site" evidence="1">
    <location>
        <position position="71"/>
    </location>
    <ligand>
        <name>a 1,2-diacyl-sn-glycero-3-phospho-(1D-myo-inositol 4-phosphate)</name>
        <dbReference type="ChEBI" id="CHEBI:58178"/>
    </ligand>
</feature>
<feature type="binding site" evidence="1">
    <location>
        <position position="152"/>
    </location>
    <ligand>
        <name>a 1,2-diacyl-sn-glycero-3-phospho-(1D-myo-inositol 4-phosphate)</name>
        <dbReference type="ChEBI" id="CHEBI:58178"/>
    </ligand>
</feature>
<feature type="binding site" evidence="1">
    <location>
        <position position="155"/>
    </location>
    <ligand>
        <name>a 1,2-diacyl-sn-glycero-3-phospho-(1D-myo-inositol 4-phosphate)</name>
        <dbReference type="ChEBI" id="CHEBI:58178"/>
    </ligand>
</feature>
<keyword id="KW-0333">Golgi apparatus</keyword>
<keyword id="KW-0446">Lipid-binding</keyword>
<keyword id="KW-0472">Membrane</keyword>
<keyword id="KW-1185">Reference proteome</keyword>
<comment type="function">
    <text evidence="1">Phosphatidylinositol-4-phosphate-binding protein that may play a role in the process of vesicle budding at the Golgi and anterograde transport to the plasma membrane.</text>
</comment>
<comment type="subunit">
    <text evidence="1">Homooligomer.</text>
</comment>
<comment type="subcellular location">
    <subcellularLocation>
        <location evidence="1">Golgi apparatus</location>
        <location evidence="1">Golgi stack membrane</location>
        <topology evidence="1">Peripheral membrane protein</topology>
        <orientation evidence="1">Cytoplasmic side</orientation>
    </subcellularLocation>
    <subcellularLocation>
        <location evidence="1">Golgi apparatus</location>
        <location evidence="1">trans-Golgi network membrane</location>
        <topology evidence="1">Peripheral membrane protein</topology>
        <orientation evidence="1">Cytoplasmic side</orientation>
    </subcellularLocation>
    <text evidence="1">Phosphatidylinositol 4-phosphate (PtdIns4P)-binding mediates recruitment to Golgi membranes.</text>
</comment>
<comment type="similarity">
    <text evidence="3">Belongs to the GOLPH3/VPS74 family.</text>
</comment>
<reference key="1">
    <citation type="submission" date="2006-10" db="EMBL/GenBank/DDBJ databases">
        <authorList>
            <consortium name="Sanger Xenopus tropicalis EST/cDNA project"/>
        </authorList>
    </citation>
    <scope>NUCLEOTIDE SEQUENCE [LARGE SCALE MRNA]</scope>
    <source>
        <tissue>Egg</tissue>
    </source>
</reference>
<reference key="2">
    <citation type="submission" date="2004-10" db="EMBL/GenBank/DDBJ databases">
        <authorList>
            <consortium name="NIH - Xenopus Gene Collection (XGC) project"/>
        </authorList>
    </citation>
    <scope>NUCLEOTIDE SEQUENCE [LARGE SCALE MRNA]</scope>
    <source>
        <tissue>Embryo</tissue>
    </source>
</reference>